<comment type="function">
    <text evidence="3 4">Involved in brain restructurization via hormonal control during metamorphosis. Implicated in N-glycan processing.</text>
</comment>
<comment type="catalytic activity">
    <reaction evidence="1">
        <text>Hydrolysis of terminal non-reducing N-acetyl-D-hexosamine residues in N-acetyl-beta-D-hexosaminides.</text>
        <dbReference type="EC" id="3.2.1.52"/>
    </reaction>
</comment>
<comment type="alternative products">
    <event type="alternative splicing"/>
    <isoform>
        <id>Q8WSF3-1</id>
        <name>C</name>
        <sequence type="displayed"/>
    </isoform>
    <isoform>
        <id>Q8WSF3-2</id>
        <name>B</name>
        <sequence type="described" ref="VSP_011911"/>
    </isoform>
</comment>
<comment type="tissue specificity">
    <text evidence="3">In third instar larval and early pupal brains, expressed in cells sending projections across the interhemispheric junction. In adult brain, expressed in mushroom body, ellipsoid body and pars intercerebralis.</text>
</comment>
<comment type="similarity">
    <text evidence="5">Belongs to the glycosyl hydrolase 20 family.</text>
</comment>
<comment type="sequence caution" evidence="5">
    <conflict type="erroneous initiation">
        <sequence resource="EMBL-CDS" id="AAL28585"/>
    </conflict>
</comment>
<gene>
    <name type="primary">fdl</name>
    <name type="ORF">CG8824</name>
</gene>
<reference evidence="5" key="1">
    <citation type="journal article" date="2000" name="J. Neurobiol.">
        <title>Central brain postembryonic development in Drosophila: implication of genes expressed at the interhemispheric junction.</title>
        <authorList>
            <person name="Boquet I."/>
            <person name="Hitier R."/>
            <person name="Dumas M."/>
            <person name="Chaminade M."/>
            <person name="Preat T."/>
        </authorList>
    </citation>
    <scope>NUCLEOTIDE SEQUENCE (ISOFORM C)</scope>
    <scope>FUNCTION</scope>
    <scope>TISSUE SPECIFICITY</scope>
</reference>
<reference key="2">
    <citation type="journal article" date="2000" name="Science">
        <title>The genome sequence of Drosophila melanogaster.</title>
        <authorList>
            <person name="Adams M.D."/>
            <person name="Celniker S.E."/>
            <person name="Holt R.A."/>
            <person name="Evans C.A."/>
            <person name="Gocayne J.D."/>
            <person name="Amanatides P.G."/>
            <person name="Scherer S.E."/>
            <person name="Li P.W."/>
            <person name="Hoskins R.A."/>
            <person name="Galle R.F."/>
            <person name="George R.A."/>
            <person name="Lewis S.E."/>
            <person name="Richards S."/>
            <person name="Ashburner M."/>
            <person name="Henderson S.N."/>
            <person name="Sutton G.G."/>
            <person name="Wortman J.R."/>
            <person name="Yandell M.D."/>
            <person name="Zhang Q."/>
            <person name="Chen L.X."/>
            <person name="Brandon R.C."/>
            <person name="Rogers Y.-H.C."/>
            <person name="Blazej R.G."/>
            <person name="Champe M."/>
            <person name="Pfeiffer B.D."/>
            <person name="Wan K.H."/>
            <person name="Doyle C."/>
            <person name="Baxter E.G."/>
            <person name="Helt G."/>
            <person name="Nelson C.R."/>
            <person name="Miklos G.L.G."/>
            <person name="Abril J.F."/>
            <person name="Agbayani A."/>
            <person name="An H.-J."/>
            <person name="Andrews-Pfannkoch C."/>
            <person name="Baldwin D."/>
            <person name="Ballew R.M."/>
            <person name="Basu A."/>
            <person name="Baxendale J."/>
            <person name="Bayraktaroglu L."/>
            <person name="Beasley E.M."/>
            <person name="Beeson K.Y."/>
            <person name="Benos P.V."/>
            <person name="Berman B.P."/>
            <person name="Bhandari D."/>
            <person name="Bolshakov S."/>
            <person name="Borkova D."/>
            <person name="Botchan M.R."/>
            <person name="Bouck J."/>
            <person name="Brokstein P."/>
            <person name="Brottier P."/>
            <person name="Burtis K.C."/>
            <person name="Busam D.A."/>
            <person name="Butler H."/>
            <person name="Cadieu E."/>
            <person name="Center A."/>
            <person name="Chandra I."/>
            <person name="Cherry J.M."/>
            <person name="Cawley S."/>
            <person name="Dahlke C."/>
            <person name="Davenport L.B."/>
            <person name="Davies P."/>
            <person name="de Pablos B."/>
            <person name="Delcher A."/>
            <person name="Deng Z."/>
            <person name="Mays A.D."/>
            <person name="Dew I."/>
            <person name="Dietz S.M."/>
            <person name="Dodson K."/>
            <person name="Doup L.E."/>
            <person name="Downes M."/>
            <person name="Dugan-Rocha S."/>
            <person name="Dunkov B.C."/>
            <person name="Dunn P."/>
            <person name="Durbin K.J."/>
            <person name="Evangelista C.C."/>
            <person name="Ferraz C."/>
            <person name="Ferriera S."/>
            <person name="Fleischmann W."/>
            <person name="Fosler C."/>
            <person name="Gabrielian A.E."/>
            <person name="Garg N.S."/>
            <person name="Gelbart W.M."/>
            <person name="Glasser K."/>
            <person name="Glodek A."/>
            <person name="Gong F."/>
            <person name="Gorrell J.H."/>
            <person name="Gu Z."/>
            <person name="Guan P."/>
            <person name="Harris M."/>
            <person name="Harris N.L."/>
            <person name="Harvey D.A."/>
            <person name="Heiman T.J."/>
            <person name="Hernandez J.R."/>
            <person name="Houck J."/>
            <person name="Hostin D."/>
            <person name="Houston K.A."/>
            <person name="Howland T.J."/>
            <person name="Wei M.-H."/>
            <person name="Ibegwam C."/>
            <person name="Jalali M."/>
            <person name="Kalush F."/>
            <person name="Karpen G.H."/>
            <person name="Ke Z."/>
            <person name="Kennison J.A."/>
            <person name="Ketchum K.A."/>
            <person name="Kimmel B.E."/>
            <person name="Kodira C.D."/>
            <person name="Kraft C.L."/>
            <person name="Kravitz S."/>
            <person name="Kulp D."/>
            <person name="Lai Z."/>
            <person name="Lasko P."/>
            <person name="Lei Y."/>
            <person name="Levitsky A.A."/>
            <person name="Li J.H."/>
            <person name="Li Z."/>
            <person name="Liang Y."/>
            <person name="Lin X."/>
            <person name="Liu X."/>
            <person name="Mattei B."/>
            <person name="McIntosh T.C."/>
            <person name="McLeod M.P."/>
            <person name="McPherson D."/>
            <person name="Merkulov G."/>
            <person name="Milshina N.V."/>
            <person name="Mobarry C."/>
            <person name="Morris J."/>
            <person name="Moshrefi A."/>
            <person name="Mount S.M."/>
            <person name="Moy M."/>
            <person name="Murphy B."/>
            <person name="Murphy L."/>
            <person name="Muzny D.M."/>
            <person name="Nelson D.L."/>
            <person name="Nelson D.R."/>
            <person name="Nelson K.A."/>
            <person name="Nixon K."/>
            <person name="Nusskern D.R."/>
            <person name="Pacleb J.M."/>
            <person name="Palazzolo M."/>
            <person name="Pittman G.S."/>
            <person name="Pan S."/>
            <person name="Pollard J."/>
            <person name="Puri V."/>
            <person name="Reese M.G."/>
            <person name="Reinert K."/>
            <person name="Remington K."/>
            <person name="Saunders R.D.C."/>
            <person name="Scheeler F."/>
            <person name="Shen H."/>
            <person name="Shue B.C."/>
            <person name="Siden-Kiamos I."/>
            <person name="Simpson M."/>
            <person name="Skupski M.P."/>
            <person name="Smith T.J."/>
            <person name="Spier E."/>
            <person name="Spradling A.C."/>
            <person name="Stapleton M."/>
            <person name="Strong R."/>
            <person name="Sun E."/>
            <person name="Svirskas R."/>
            <person name="Tector C."/>
            <person name="Turner R."/>
            <person name="Venter E."/>
            <person name="Wang A.H."/>
            <person name="Wang X."/>
            <person name="Wang Z.-Y."/>
            <person name="Wassarman D.A."/>
            <person name="Weinstock G.M."/>
            <person name="Weissenbach J."/>
            <person name="Williams S.M."/>
            <person name="Woodage T."/>
            <person name="Worley K.C."/>
            <person name="Wu D."/>
            <person name="Yang S."/>
            <person name="Yao Q.A."/>
            <person name="Ye J."/>
            <person name="Yeh R.-F."/>
            <person name="Zaveri J.S."/>
            <person name="Zhan M."/>
            <person name="Zhang G."/>
            <person name="Zhao Q."/>
            <person name="Zheng L."/>
            <person name="Zheng X.H."/>
            <person name="Zhong F.N."/>
            <person name="Zhong W."/>
            <person name="Zhou X."/>
            <person name="Zhu S.C."/>
            <person name="Zhu X."/>
            <person name="Smith H.O."/>
            <person name="Gibbs R.A."/>
            <person name="Myers E.W."/>
            <person name="Rubin G.M."/>
            <person name="Venter J.C."/>
        </authorList>
    </citation>
    <scope>NUCLEOTIDE SEQUENCE [LARGE SCALE GENOMIC DNA]</scope>
    <source>
        <strain>Berkeley</strain>
    </source>
</reference>
<reference evidence="5" key="3">
    <citation type="journal article" date="2002" name="Genome Biol.">
        <title>Annotation of the Drosophila melanogaster euchromatic genome: a systematic review.</title>
        <authorList>
            <person name="Misra S."/>
            <person name="Crosby M.A."/>
            <person name="Mungall C.J."/>
            <person name="Matthews B.B."/>
            <person name="Campbell K.S."/>
            <person name="Hradecky P."/>
            <person name="Huang Y."/>
            <person name="Kaminker J.S."/>
            <person name="Millburn G.H."/>
            <person name="Prochnik S.E."/>
            <person name="Smith C.D."/>
            <person name="Tupy J.L."/>
            <person name="Whitfield E.J."/>
            <person name="Bayraktaroglu L."/>
            <person name="Berman B.P."/>
            <person name="Bettencourt B.R."/>
            <person name="Celniker S.E."/>
            <person name="de Grey A.D.N.J."/>
            <person name="Drysdale R.A."/>
            <person name="Harris N.L."/>
            <person name="Richter J."/>
            <person name="Russo S."/>
            <person name="Schroeder A.J."/>
            <person name="Shu S.Q."/>
            <person name="Stapleton M."/>
            <person name="Yamada C."/>
            <person name="Ashburner M."/>
            <person name="Gelbart W.M."/>
            <person name="Rubin G.M."/>
            <person name="Lewis S.E."/>
        </authorList>
    </citation>
    <scope>GENOME REANNOTATION</scope>
    <scope>ALTERNATIVE SPLICING</scope>
    <source>
        <strain>Berkeley</strain>
    </source>
</reference>
<reference evidence="5" key="4">
    <citation type="journal article" date="2002" name="Genome Biol.">
        <title>A Drosophila full-length cDNA resource.</title>
        <authorList>
            <person name="Stapleton M."/>
            <person name="Carlson J.W."/>
            <person name="Brokstein P."/>
            <person name="Yu C."/>
            <person name="Champe M."/>
            <person name="George R.A."/>
            <person name="Guarin H."/>
            <person name="Kronmiller B."/>
            <person name="Pacleb J.M."/>
            <person name="Park S."/>
            <person name="Wan K.H."/>
            <person name="Rubin G.M."/>
            <person name="Celniker S.E."/>
        </authorList>
    </citation>
    <scope>NUCLEOTIDE SEQUENCE [LARGE SCALE MRNA] (ISOFORM C)</scope>
    <source>
        <strain evidence="8">Berkeley</strain>
        <tissue evidence="8">Embryo</tissue>
        <tissue evidence="6">Head</tissue>
    </source>
</reference>
<reference key="5">
    <citation type="submission" date="2003-04" db="UniProtKB">
        <authorList>
            <person name="Leonard R."/>
            <person name="Altmann F."/>
        </authorList>
    </citation>
    <scope>FUNCTION IN N-GLYCAN PROCESSING</scope>
</reference>
<keyword id="KW-0025">Alternative splicing</keyword>
<keyword id="KW-0217">Developmental protein</keyword>
<keyword id="KW-0325">Glycoprotein</keyword>
<keyword id="KW-0326">Glycosidase</keyword>
<keyword id="KW-0378">Hydrolase</keyword>
<keyword id="KW-1185">Reference proteome</keyword>
<keyword id="KW-0732">Signal</keyword>
<organism evidence="7">
    <name type="scientific">Drosophila melanogaster</name>
    <name type="common">Fruit fly</name>
    <dbReference type="NCBI Taxonomy" id="7227"/>
    <lineage>
        <taxon>Eukaryota</taxon>
        <taxon>Metazoa</taxon>
        <taxon>Ecdysozoa</taxon>
        <taxon>Arthropoda</taxon>
        <taxon>Hexapoda</taxon>
        <taxon>Insecta</taxon>
        <taxon>Pterygota</taxon>
        <taxon>Neoptera</taxon>
        <taxon>Endopterygota</taxon>
        <taxon>Diptera</taxon>
        <taxon>Brachycera</taxon>
        <taxon>Muscomorpha</taxon>
        <taxon>Ephydroidea</taxon>
        <taxon>Drosophilidae</taxon>
        <taxon>Drosophila</taxon>
        <taxon>Sophophora</taxon>
    </lineage>
</organism>
<sequence>MSLAVSLRRALLVLLTGAIFILTVLYWNQGVTKAQAYNEALERPHSHHDASGFPIPVEKSWTYKCENDRCMRVGHHGKSAKRVSFISCSMTCGDVNIWPHPTQKFLLSSQTHSFSVEDVQLHVDTAHREVRKQLQLAFDWFLKDLRLIQRLDYVGSSSEPTVSESSSKSRHHADLEPAATLFGATFGVKKAGDLTSVQVKISVLKSGDLNFSLDNDETYQLSTQTEGHRLQVEIIANSYFGARHGLSTLQQLIWFDDEDHLLHTYANSKVKDAPKFRYRGLMLDTSRHFFSVESIKRTIVGMGLAKMNRFHWHLTDAQSFPYISRYYPELAVHGAYSESETYSEQDVREVAEFAKIYGVQVIPEIDAPAHAGNGWDWGPKRGMGELAMCINQQPWSFYCGEPPCGQLNPKNNYTYLILQRIYEELLQHTGPTDFFHLGGDEVNLDCWAQYFNDTDLRGLWCDFMLQAMARLKLANNGVAPKHVAVWSSALTNTKCLPNSQFTVQVWGGSTWQENYDLLDNGYNVIFSHVDAWYLDCGFGSWRATGDAACAPYRTWQNVYKHRPWERMRLDKKRKKQVLGGEVCMWTEQVDENQLDNRLWPRTAALAERLWTDPSDDHDMDIVPPDVFRRISLFRNRLVELGIRAEALFPKYCAQNPGECI</sequence>
<dbReference type="EC" id="3.2.1.52"/>
<dbReference type="EMBL" id="AF323977">
    <property type="protein sequence ID" value="AAL55992.1"/>
    <property type="molecule type" value="mRNA"/>
</dbReference>
<dbReference type="EMBL" id="AE013599">
    <property type="protein sequence ID" value="AAM68691.2"/>
    <property type="molecule type" value="Genomic_DNA"/>
</dbReference>
<dbReference type="EMBL" id="AE013599">
    <property type="protein sequence ID" value="AAM68692.1"/>
    <property type="molecule type" value="Genomic_DNA"/>
</dbReference>
<dbReference type="EMBL" id="AY113418">
    <property type="protein sequence ID" value="AAM29423.1"/>
    <property type="molecule type" value="mRNA"/>
</dbReference>
<dbReference type="EMBL" id="AY061037">
    <property type="protein sequence ID" value="AAL28585.1"/>
    <property type="status" value="ALT_INIT"/>
    <property type="molecule type" value="mRNA"/>
</dbReference>
<dbReference type="RefSeq" id="NP_001286350.1">
    <molecule id="Q8WSF3-1"/>
    <property type="nucleotide sequence ID" value="NM_001299421.1"/>
</dbReference>
<dbReference type="RefSeq" id="NP_725178.2">
    <molecule id="Q8WSF3-2"/>
    <property type="nucleotide sequence ID" value="NM_165908.2"/>
</dbReference>
<dbReference type="RefSeq" id="NP_725179.1">
    <molecule id="Q8WSF3-1"/>
    <property type="nucleotide sequence ID" value="NM_165909.3"/>
</dbReference>
<dbReference type="SMR" id="Q8WSF3"/>
<dbReference type="BioGRID" id="75345">
    <property type="interactions" value="6"/>
</dbReference>
<dbReference type="DIP" id="DIP-21467N"/>
<dbReference type="FunCoup" id="Q8WSF3">
    <property type="interactions" value="1471"/>
</dbReference>
<dbReference type="IntAct" id="Q8WSF3">
    <property type="interactions" value="2"/>
</dbReference>
<dbReference type="STRING" id="7227.FBpp0087058"/>
<dbReference type="CAZy" id="GH20">
    <property type="family name" value="Glycoside Hydrolase Family 20"/>
</dbReference>
<dbReference type="GlyCosmos" id="Q8WSF3">
    <property type="glycosylation" value="3 sites, No reported glycans"/>
</dbReference>
<dbReference type="GlyGen" id="Q8WSF3">
    <property type="glycosylation" value="3 sites"/>
</dbReference>
<dbReference type="PaxDb" id="7227-FBpp0087058"/>
<dbReference type="EnsemblMetazoa" id="FBtr0087946">
    <molecule id="Q8WSF3-1"/>
    <property type="protein sequence ID" value="FBpp0087057"/>
    <property type="gene ID" value="FBgn0045063"/>
</dbReference>
<dbReference type="EnsemblMetazoa" id="FBtr0087947">
    <molecule id="Q8WSF3-2"/>
    <property type="protein sequence ID" value="FBpp0087058"/>
    <property type="gene ID" value="FBgn0045063"/>
</dbReference>
<dbReference type="EnsemblMetazoa" id="FBtr0346633">
    <molecule id="Q8WSF3-1"/>
    <property type="protein sequence ID" value="FBpp0312213"/>
    <property type="gene ID" value="FBgn0045063"/>
</dbReference>
<dbReference type="GeneID" id="250735"/>
<dbReference type="KEGG" id="dme:Dmel_CG8824"/>
<dbReference type="AGR" id="FB:FBgn0045063"/>
<dbReference type="CTD" id="250735"/>
<dbReference type="FlyBase" id="FBgn0045063">
    <property type="gene designation" value="fdl"/>
</dbReference>
<dbReference type="VEuPathDB" id="VectorBase:FBgn0045063"/>
<dbReference type="eggNOG" id="KOG2499">
    <property type="taxonomic scope" value="Eukaryota"/>
</dbReference>
<dbReference type="GeneTree" id="ENSGT00390000008107"/>
<dbReference type="HOGENOM" id="CLU_007082_0_1_1"/>
<dbReference type="InParanoid" id="Q8WSF3"/>
<dbReference type="OMA" id="ENERCIR"/>
<dbReference type="OrthoDB" id="428480at2759"/>
<dbReference type="PhylomeDB" id="Q8WSF3"/>
<dbReference type="Reactome" id="R-DME-2022857">
    <property type="pathway name" value="Keratan sulfate degradation"/>
</dbReference>
<dbReference type="Reactome" id="R-DME-2024101">
    <property type="pathway name" value="CS/DS degradation"/>
</dbReference>
<dbReference type="Reactome" id="R-DME-2160916">
    <property type="pathway name" value="Hyaluronan uptake and degradation"/>
</dbReference>
<dbReference type="Reactome" id="R-DME-6798695">
    <property type="pathway name" value="Neutrophil degranulation"/>
</dbReference>
<dbReference type="Reactome" id="R-DME-9840310">
    <property type="pathway name" value="Glycosphingolipid catabolism"/>
</dbReference>
<dbReference type="SignaLink" id="Q8WSF3"/>
<dbReference type="BioGRID-ORCS" id="250735">
    <property type="hits" value="0 hits in 1 CRISPR screen"/>
</dbReference>
<dbReference type="GenomeRNAi" id="250735"/>
<dbReference type="PRO" id="PR:Q8WSF3"/>
<dbReference type="Proteomes" id="UP000000803">
    <property type="component" value="Chromosome 2R"/>
</dbReference>
<dbReference type="Bgee" id="FBgn0045063">
    <property type="expression patterns" value="Expressed in egg cell and 103 other cell types or tissues"/>
</dbReference>
<dbReference type="ExpressionAtlas" id="Q8WSF3">
    <property type="expression patterns" value="baseline and differential"/>
</dbReference>
<dbReference type="GO" id="GO:0005770">
    <property type="term" value="C:late endosome"/>
    <property type="evidence" value="ECO:0000314"/>
    <property type="project" value="FlyBase"/>
</dbReference>
<dbReference type="GO" id="GO:0005886">
    <property type="term" value="C:plasma membrane"/>
    <property type="evidence" value="ECO:0000314"/>
    <property type="project" value="FlyBase"/>
</dbReference>
<dbReference type="GO" id="GO:0016231">
    <property type="term" value="F:beta-N-acetylglucosaminidase activity"/>
    <property type="evidence" value="ECO:0000314"/>
    <property type="project" value="FlyBase"/>
</dbReference>
<dbReference type="GO" id="GO:0004563">
    <property type="term" value="F:beta-N-acetylhexosaminidase activity"/>
    <property type="evidence" value="ECO:0000250"/>
    <property type="project" value="UniProtKB"/>
</dbReference>
<dbReference type="GO" id="GO:0007420">
    <property type="term" value="P:brain development"/>
    <property type="evidence" value="ECO:0000315"/>
    <property type="project" value="UniProtKB"/>
</dbReference>
<dbReference type="GO" id="GO:0005975">
    <property type="term" value="P:carbohydrate metabolic process"/>
    <property type="evidence" value="ECO:0007669"/>
    <property type="project" value="InterPro"/>
</dbReference>
<dbReference type="GO" id="GO:0030203">
    <property type="term" value="P:glycosaminoglycan metabolic process"/>
    <property type="evidence" value="ECO:0000318"/>
    <property type="project" value="GO_Central"/>
</dbReference>
<dbReference type="GO" id="GO:0006491">
    <property type="term" value="P:N-glycan processing"/>
    <property type="evidence" value="ECO:0000314"/>
    <property type="project" value="FlyBase"/>
</dbReference>
<dbReference type="GO" id="GO:0016063">
    <property type="term" value="P:rhodopsin biosynthetic process"/>
    <property type="evidence" value="ECO:0000315"/>
    <property type="project" value="FlyBase"/>
</dbReference>
<dbReference type="CDD" id="cd06562">
    <property type="entry name" value="GH20_HexA_HexB-like"/>
    <property type="match status" value="1"/>
</dbReference>
<dbReference type="FunFam" id="3.20.20.80:FF:000063">
    <property type="entry name" value="Beta-hexosaminidase"/>
    <property type="match status" value="1"/>
</dbReference>
<dbReference type="FunFam" id="3.30.379.10:FF:000002">
    <property type="entry name" value="Beta-hexosaminidase"/>
    <property type="match status" value="1"/>
</dbReference>
<dbReference type="Gene3D" id="3.30.379.10">
    <property type="entry name" value="Chitobiase/beta-hexosaminidase domain 2-like"/>
    <property type="match status" value="1"/>
</dbReference>
<dbReference type="Gene3D" id="3.20.20.80">
    <property type="entry name" value="Glycosidases"/>
    <property type="match status" value="1"/>
</dbReference>
<dbReference type="InterPro" id="IPR025705">
    <property type="entry name" value="Beta_hexosaminidase_sua/sub"/>
</dbReference>
<dbReference type="InterPro" id="IPR015883">
    <property type="entry name" value="Glyco_hydro_20_cat"/>
</dbReference>
<dbReference type="InterPro" id="IPR017853">
    <property type="entry name" value="Glycoside_hydrolase_SF"/>
</dbReference>
<dbReference type="InterPro" id="IPR029018">
    <property type="entry name" value="Hex-like_dom2"/>
</dbReference>
<dbReference type="InterPro" id="IPR029019">
    <property type="entry name" value="HEX_eukaryotic_N"/>
</dbReference>
<dbReference type="PANTHER" id="PTHR22600">
    <property type="entry name" value="BETA-HEXOSAMINIDASE"/>
    <property type="match status" value="1"/>
</dbReference>
<dbReference type="PANTHER" id="PTHR22600:SF3">
    <property type="entry name" value="BETA-HEXOSAMINIDASE FDL-RELATED"/>
    <property type="match status" value="1"/>
</dbReference>
<dbReference type="Pfam" id="PF00728">
    <property type="entry name" value="Glyco_hydro_20"/>
    <property type="match status" value="1"/>
</dbReference>
<dbReference type="Pfam" id="PF14845">
    <property type="entry name" value="Glycohydro_20b2"/>
    <property type="match status" value="1"/>
</dbReference>
<dbReference type="PIRSF" id="PIRSF001093">
    <property type="entry name" value="B-hxosamndse_ab_euk"/>
    <property type="match status" value="1"/>
</dbReference>
<dbReference type="PRINTS" id="PR00738">
    <property type="entry name" value="GLHYDRLASE20"/>
</dbReference>
<dbReference type="SUPFAM" id="SSF51445">
    <property type="entry name" value="(Trans)glycosidases"/>
    <property type="match status" value="1"/>
</dbReference>
<dbReference type="SUPFAM" id="SSF55545">
    <property type="entry name" value="beta-N-acetylhexosaminidase-like domain"/>
    <property type="match status" value="1"/>
</dbReference>
<name>FDL_DROME</name>
<protein>
    <recommendedName>
        <fullName>Probable beta-hexosaminidase fdl</fullName>
        <ecNumber>3.2.1.52</ecNumber>
    </recommendedName>
    <alternativeName>
        <fullName>Protein fused lobes</fullName>
    </alternativeName>
</protein>
<feature type="signal peptide" evidence="2">
    <location>
        <begin position="1"/>
        <end position="36"/>
    </location>
</feature>
<feature type="chain" id="PRO_0000012017" description="Probable beta-hexosaminidase fdl">
    <location>
        <begin position="37"/>
        <end position="660"/>
    </location>
</feature>
<feature type="glycosylation site" description="N-linked (GlcNAc...) asparagine" evidence="2">
    <location>
        <position position="210"/>
    </location>
</feature>
<feature type="glycosylation site" description="N-linked (GlcNAc...) asparagine" evidence="2">
    <location>
        <position position="412"/>
    </location>
</feature>
<feature type="glycosylation site" description="N-linked (GlcNAc...) asparagine" evidence="2">
    <location>
        <position position="452"/>
    </location>
</feature>
<feature type="splice variant" id="VSP_011911" description="In isoform B." evidence="5">
    <original>M</original>
    <variation>MRYVYESLRYLYKM</variation>
    <location>
        <position position="1"/>
    </location>
</feature>
<feature type="sequence conflict" description="In Ref. 4; AAM29423." evidence="5" ref="4">
    <original>V</original>
    <variation>G</variation>
    <location>
        <position position="154"/>
    </location>
</feature>
<feature type="sequence conflict" description="In Ref. 4; AAM29423." evidence="5" ref="4">
    <original>C</original>
    <variation>R</variation>
    <location>
        <position position="495"/>
    </location>
</feature>
<feature type="sequence conflict" description="In Ref. 4; AAM29423." evidence="5" ref="4">
    <original>P</original>
    <variation>Q</variation>
    <location>
        <position position="551"/>
    </location>
</feature>
<evidence type="ECO:0000250" key="1">
    <source>
        <dbReference type="UniProtKB" id="P49010"/>
    </source>
</evidence>
<evidence type="ECO:0000255" key="2"/>
<evidence type="ECO:0000269" key="3">
    <source>
    </source>
</evidence>
<evidence type="ECO:0000269" key="4">
    <source ref="5"/>
</evidence>
<evidence type="ECO:0000305" key="5"/>
<evidence type="ECO:0000312" key="6">
    <source>
        <dbReference type="EMBL" id="AAL28585.1"/>
    </source>
</evidence>
<evidence type="ECO:0000312" key="7">
    <source>
        <dbReference type="EMBL" id="AAL55992.1"/>
    </source>
</evidence>
<evidence type="ECO:0000312" key="8">
    <source>
        <dbReference type="EMBL" id="AAM29423.1"/>
    </source>
</evidence>
<accession>Q8WSF3</accession>
<accession>Q8MZ16</accession>
<accession>Q95RY8</accession>
<accession>Q9V6C8</accession>
<proteinExistence type="evidence at protein level"/>